<accession>Q99466</accession>
<accession>B0V183</accession>
<accession>B0V1X5</accession>
<accession>O00306</accession>
<accession>Q5SSY7</accession>
<accession>Q99458</accession>
<accession>Q99940</accession>
<accession>Q9H3S8</accession>
<accession>Q9UII9</accession>
<accession>Q9UIJ0</accession>
<reference key="1">
    <citation type="journal article" date="1997" name="Gene">
        <title>Gene organization of human NOTCH4 and (CTG)n polymorphism in this human counterpart gene of mouse proto-oncogene Int3.</title>
        <authorList>
            <person name="Sugaya K."/>
            <person name="Sasanuma S."/>
            <person name="Nohata J."/>
            <person name="Kimura T."/>
            <person name="Fukagawa T."/>
            <person name="Nakamura Y."/>
            <person name="Ando A."/>
            <person name="Inoko H."/>
            <person name="Ikemura T."/>
            <person name="Mita K."/>
        </authorList>
    </citation>
    <scope>NUCLEOTIDE SEQUENCE [GENOMIC DNA / MRNA] (ISOFORM 1)</scope>
    <scope>POLYMORPHISM OF POLY-LEU REGION</scope>
    <source>
        <tissue>Placenta</tissue>
    </source>
</reference>
<reference key="2">
    <citation type="journal article" date="1998" name="Genomics">
        <title>Cloning, characterization, and the complete 56.8-kilobase DNA sequence of the human NOTCH4 gene.</title>
        <authorList>
            <person name="Li L."/>
            <person name="Huang G.M."/>
            <person name="Banta A.B."/>
            <person name="Deng Y."/>
            <person name="Smith T."/>
            <person name="Dong P."/>
            <person name="Friedman C."/>
            <person name="Chen L."/>
            <person name="Trask B.J."/>
            <person name="Spies T."/>
            <person name="Rowen L."/>
            <person name="Hood L."/>
        </authorList>
    </citation>
    <scope>NUCLEOTIDE SEQUENCE [GENOMIC DNA / MRNA] (ISOFORMS 1; 2 AND 3)</scope>
    <source>
        <tissue>Bone marrow</tissue>
        <tissue>Heart</tissue>
    </source>
</reference>
<reference key="3">
    <citation type="journal article" date="2003" name="Nature">
        <title>The DNA sequence and analysis of human chromosome 6.</title>
        <authorList>
            <person name="Mungall A.J."/>
            <person name="Palmer S.A."/>
            <person name="Sims S.K."/>
            <person name="Edwards C.A."/>
            <person name="Ashurst J.L."/>
            <person name="Wilming L."/>
            <person name="Jones M.C."/>
            <person name="Horton R."/>
            <person name="Hunt S.E."/>
            <person name="Scott C.E."/>
            <person name="Gilbert J.G.R."/>
            <person name="Clamp M.E."/>
            <person name="Bethel G."/>
            <person name="Milne S."/>
            <person name="Ainscough R."/>
            <person name="Almeida J.P."/>
            <person name="Ambrose K.D."/>
            <person name="Andrews T.D."/>
            <person name="Ashwell R.I.S."/>
            <person name="Babbage A.K."/>
            <person name="Bagguley C.L."/>
            <person name="Bailey J."/>
            <person name="Banerjee R."/>
            <person name="Barker D.J."/>
            <person name="Barlow K.F."/>
            <person name="Bates K."/>
            <person name="Beare D.M."/>
            <person name="Beasley H."/>
            <person name="Beasley O."/>
            <person name="Bird C.P."/>
            <person name="Blakey S.E."/>
            <person name="Bray-Allen S."/>
            <person name="Brook J."/>
            <person name="Brown A.J."/>
            <person name="Brown J.Y."/>
            <person name="Burford D.C."/>
            <person name="Burrill W."/>
            <person name="Burton J."/>
            <person name="Carder C."/>
            <person name="Carter N.P."/>
            <person name="Chapman J.C."/>
            <person name="Clark S.Y."/>
            <person name="Clark G."/>
            <person name="Clee C.M."/>
            <person name="Clegg S."/>
            <person name="Cobley V."/>
            <person name="Collier R.E."/>
            <person name="Collins J.E."/>
            <person name="Colman L.K."/>
            <person name="Corby N.R."/>
            <person name="Coville G.J."/>
            <person name="Culley K.M."/>
            <person name="Dhami P."/>
            <person name="Davies J."/>
            <person name="Dunn M."/>
            <person name="Earthrowl M.E."/>
            <person name="Ellington A.E."/>
            <person name="Evans K.A."/>
            <person name="Faulkner L."/>
            <person name="Francis M.D."/>
            <person name="Frankish A."/>
            <person name="Frankland J."/>
            <person name="French L."/>
            <person name="Garner P."/>
            <person name="Garnett J."/>
            <person name="Ghori M.J."/>
            <person name="Gilby L.M."/>
            <person name="Gillson C.J."/>
            <person name="Glithero R.J."/>
            <person name="Grafham D.V."/>
            <person name="Grant M."/>
            <person name="Gribble S."/>
            <person name="Griffiths C."/>
            <person name="Griffiths M.N.D."/>
            <person name="Hall R."/>
            <person name="Halls K.S."/>
            <person name="Hammond S."/>
            <person name="Harley J.L."/>
            <person name="Hart E.A."/>
            <person name="Heath P.D."/>
            <person name="Heathcott R."/>
            <person name="Holmes S.J."/>
            <person name="Howden P.J."/>
            <person name="Howe K.L."/>
            <person name="Howell G.R."/>
            <person name="Huckle E."/>
            <person name="Humphray S.J."/>
            <person name="Humphries M.D."/>
            <person name="Hunt A.R."/>
            <person name="Johnson C.M."/>
            <person name="Joy A.A."/>
            <person name="Kay M."/>
            <person name="Keenan S.J."/>
            <person name="Kimberley A.M."/>
            <person name="King A."/>
            <person name="Laird G.K."/>
            <person name="Langford C."/>
            <person name="Lawlor S."/>
            <person name="Leongamornlert D.A."/>
            <person name="Leversha M."/>
            <person name="Lloyd C.R."/>
            <person name="Lloyd D.M."/>
            <person name="Loveland J.E."/>
            <person name="Lovell J."/>
            <person name="Martin S."/>
            <person name="Mashreghi-Mohammadi M."/>
            <person name="Maslen G.L."/>
            <person name="Matthews L."/>
            <person name="McCann O.T."/>
            <person name="McLaren S.J."/>
            <person name="McLay K."/>
            <person name="McMurray A."/>
            <person name="Moore M.J.F."/>
            <person name="Mullikin J.C."/>
            <person name="Niblett D."/>
            <person name="Nickerson T."/>
            <person name="Novik K.L."/>
            <person name="Oliver K."/>
            <person name="Overton-Larty E.K."/>
            <person name="Parker A."/>
            <person name="Patel R."/>
            <person name="Pearce A.V."/>
            <person name="Peck A.I."/>
            <person name="Phillimore B.J.C.T."/>
            <person name="Phillips S."/>
            <person name="Plumb R.W."/>
            <person name="Porter K.M."/>
            <person name="Ramsey Y."/>
            <person name="Ranby S.A."/>
            <person name="Rice C.M."/>
            <person name="Ross M.T."/>
            <person name="Searle S.M."/>
            <person name="Sehra H.K."/>
            <person name="Sheridan E."/>
            <person name="Skuce C.D."/>
            <person name="Smith S."/>
            <person name="Smith M."/>
            <person name="Spraggon L."/>
            <person name="Squares S.L."/>
            <person name="Steward C.A."/>
            <person name="Sycamore N."/>
            <person name="Tamlyn-Hall G."/>
            <person name="Tester J."/>
            <person name="Theaker A.J."/>
            <person name="Thomas D.W."/>
            <person name="Thorpe A."/>
            <person name="Tracey A."/>
            <person name="Tromans A."/>
            <person name="Tubby B."/>
            <person name="Wall M."/>
            <person name="Wallis J.M."/>
            <person name="West A.P."/>
            <person name="White S.S."/>
            <person name="Whitehead S.L."/>
            <person name="Whittaker H."/>
            <person name="Wild A."/>
            <person name="Willey D.J."/>
            <person name="Wilmer T.E."/>
            <person name="Wood J.M."/>
            <person name="Wray P.W."/>
            <person name="Wyatt J.C."/>
            <person name="Young L."/>
            <person name="Younger R.M."/>
            <person name="Bentley D.R."/>
            <person name="Coulson A."/>
            <person name="Durbin R.M."/>
            <person name="Hubbard T."/>
            <person name="Sulston J.E."/>
            <person name="Dunham I."/>
            <person name="Rogers J."/>
            <person name="Beck S."/>
        </authorList>
    </citation>
    <scope>NUCLEOTIDE SEQUENCE [LARGE SCALE GENOMIC DNA]</scope>
    <scope>VARIANT GLN-117</scope>
</reference>
<reference key="4">
    <citation type="submission" date="1999-02" db="EMBL/GenBank/DDBJ databases">
        <title>Human notch4 gene variant.</title>
        <authorList>
            <person name="Miyagawa T."/>
            <person name="Tokunaga K."/>
            <person name="Hojho H."/>
        </authorList>
    </citation>
    <scope>NUCLEOTIDE SEQUENCE [GENOMIC DNA] OF 1-503</scope>
    <scope>VARIANTS GLN-117 AND GLN-317</scope>
</reference>
<reference key="5">
    <citation type="journal article" date="1999" name="Am. J. Pathol.">
        <title>Human ligands of the Notch receptor.</title>
        <authorList>
            <person name="Gray G.E."/>
            <person name="Mann R.S."/>
            <person name="Mitsiadis E."/>
            <person name="Henrique D."/>
            <person name="Carcangiu M.-L."/>
            <person name="Banks A."/>
            <person name="Leiman J."/>
            <person name="Ward D."/>
            <person name="Ish-Horowitz D."/>
            <person name="Artavanis-Tsakonas S."/>
        </authorList>
    </citation>
    <scope>IDENTIFICATION OF LIGANDS</scope>
</reference>
<reference key="6">
    <citation type="journal article" date="2000" name="Nat. Genet.">
        <title>MAML1, a human homologue of Drosophila mastermind, is a transcriptional co-activator for NOTCH receptors.</title>
        <authorList>
            <person name="Wu L."/>
            <person name="Aster J.C."/>
            <person name="Blacklow S.C."/>
            <person name="Lake R."/>
            <person name="Artavanis-Tsakonas S."/>
            <person name="Griffin J.D."/>
        </authorList>
    </citation>
    <scope>INTERACTION WITH MAML1</scope>
</reference>
<reference key="7">
    <citation type="journal article" date="2001" name="J. Virol.">
        <title>An Epstein-Barr virus protein interacts with Notch.</title>
        <authorList>
            <person name="Kusano S."/>
            <person name="Raab-Traub N."/>
        </authorList>
    </citation>
    <scope>INTERACTION WITH EBV RK-BARF0 (MICROBIAL INFECTION)</scope>
</reference>
<reference key="8">
    <citation type="journal article" date="2002" name="Mol. Cell. Biol.">
        <title>Identification of a family of mastermind-like transcriptional coactivators for mammalian notch receptors.</title>
        <authorList>
            <person name="Wu L."/>
            <person name="Sun T."/>
            <person name="Kobayashi K."/>
            <person name="Gao P."/>
            <person name="Griffin J.D."/>
        </authorList>
    </citation>
    <scope>INTERACTION WITH MAML2 AND MAML3</scope>
</reference>
<organism>
    <name type="scientific">Homo sapiens</name>
    <name type="common">Human</name>
    <dbReference type="NCBI Taxonomy" id="9606"/>
    <lineage>
        <taxon>Eukaryota</taxon>
        <taxon>Metazoa</taxon>
        <taxon>Chordata</taxon>
        <taxon>Craniata</taxon>
        <taxon>Vertebrata</taxon>
        <taxon>Euteleostomi</taxon>
        <taxon>Mammalia</taxon>
        <taxon>Eutheria</taxon>
        <taxon>Euarchontoglires</taxon>
        <taxon>Primates</taxon>
        <taxon>Haplorrhini</taxon>
        <taxon>Catarrhini</taxon>
        <taxon>Hominidae</taxon>
        <taxon>Homo</taxon>
    </lineage>
</organism>
<proteinExistence type="evidence at protein level"/>
<protein>
    <recommendedName>
        <fullName evidence="12">Neurogenic locus notch homolog protein 4</fullName>
        <shortName>Notch 4</shortName>
        <shortName>hNotch4</shortName>
    </recommendedName>
    <component>
        <recommendedName>
            <fullName>Notch 4 extracellular truncation</fullName>
        </recommendedName>
    </component>
    <component>
        <recommendedName>
            <fullName>Notch 4 intracellular domain</fullName>
        </recommendedName>
    </component>
</protein>
<keyword id="KW-0002">3D-structure</keyword>
<keyword id="KW-0010">Activator</keyword>
<keyword id="KW-0025">Alternative splicing</keyword>
<keyword id="KW-0040">ANK repeat</keyword>
<keyword id="KW-1003">Cell membrane</keyword>
<keyword id="KW-0217">Developmental protein</keyword>
<keyword id="KW-0221">Differentiation</keyword>
<keyword id="KW-1015">Disulfide bond</keyword>
<keyword id="KW-0245">EGF-like domain</keyword>
<keyword id="KW-0325">Glycoprotein</keyword>
<keyword id="KW-0945">Host-virus interaction</keyword>
<keyword id="KW-0472">Membrane</keyword>
<keyword id="KW-0914">Notch signaling pathway</keyword>
<keyword id="KW-0539">Nucleus</keyword>
<keyword id="KW-0597">Phosphoprotein</keyword>
<keyword id="KW-1267">Proteomics identification</keyword>
<keyword id="KW-0675">Receptor</keyword>
<keyword id="KW-1185">Reference proteome</keyword>
<keyword id="KW-0677">Repeat</keyword>
<keyword id="KW-0732">Signal</keyword>
<keyword id="KW-0804">Transcription</keyword>
<keyword id="KW-0805">Transcription regulation</keyword>
<keyword id="KW-0812">Transmembrane</keyword>
<keyword id="KW-1133">Transmembrane helix</keyword>
<keyword id="KW-0818">Triplet repeat expansion</keyword>
<feature type="signal peptide" evidence="2">
    <location>
        <begin position="1"/>
        <end position="23"/>
    </location>
</feature>
<feature type="chain" id="PRO_0000007701" description="Neurogenic locus notch homolog protein 4">
    <location>
        <begin position="24"/>
        <end position="2003"/>
    </location>
</feature>
<feature type="chain" id="PRO_0000007702" description="Notch 4 extracellular truncation" evidence="1">
    <location>
        <begin position="1432"/>
        <end position="2003"/>
    </location>
</feature>
<feature type="chain" id="PRO_0000007703" description="Notch 4 intracellular domain" evidence="1">
    <location>
        <begin position="1467"/>
        <end position="2003"/>
    </location>
</feature>
<feature type="topological domain" description="Extracellular" evidence="2">
    <location>
        <begin position="24"/>
        <end position="1447"/>
    </location>
</feature>
<feature type="transmembrane region" description="Helical" evidence="2">
    <location>
        <begin position="1448"/>
        <end position="1468"/>
    </location>
</feature>
<feature type="topological domain" description="Cytoplasmic" evidence="2">
    <location>
        <begin position="1469"/>
        <end position="2003"/>
    </location>
</feature>
<feature type="domain" description="EGF-like 1" evidence="3">
    <location>
        <begin position="24"/>
        <end position="63"/>
    </location>
</feature>
<feature type="domain" description="EGF-like 2" evidence="3">
    <location>
        <begin position="64"/>
        <end position="115"/>
    </location>
</feature>
<feature type="domain" description="EGF-like 3" evidence="3">
    <location>
        <begin position="118"/>
        <end position="155"/>
    </location>
</feature>
<feature type="domain" description="EGF-like 4" evidence="3">
    <location>
        <begin position="156"/>
        <end position="192"/>
    </location>
</feature>
<feature type="domain" description="EGF-like 5; calcium-binding" evidence="3">
    <location>
        <begin position="194"/>
        <end position="232"/>
    </location>
</feature>
<feature type="domain" description="EGF-like 6" evidence="3">
    <location>
        <begin position="234"/>
        <end position="274"/>
    </location>
</feature>
<feature type="domain" description="EGF-like 7; calcium-binding" evidence="3">
    <location>
        <begin position="276"/>
        <end position="312"/>
    </location>
</feature>
<feature type="domain" description="EGF-like 8; calcium-binding" evidence="3">
    <location>
        <begin position="314"/>
        <end position="353"/>
    </location>
</feature>
<feature type="domain" description="EGF-like 9; calcium-binding" evidence="3">
    <location>
        <begin position="355"/>
        <end position="391"/>
    </location>
</feature>
<feature type="domain" description="EGF-like 10" evidence="3">
    <location>
        <begin position="392"/>
        <end position="430"/>
    </location>
</feature>
<feature type="domain" description="EGF-like 11; calcium-binding" evidence="3">
    <location>
        <begin position="432"/>
        <end position="473"/>
    </location>
</feature>
<feature type="domain" description="EGF-like 12; calcium-binding" evidence="3">
    <location>
        <begin position="475"/>
        <end position="511"/>
    </location>
</feature>
<feature type="domain" description="EGF-like 13; calcium-binding" evidence="3">
    <location>
        <begin position="513"/>
        <end position="549"/>
    </location>
</feature>
<feature type="domain" description="EGF-like 14; calcium-binding" evidence="3">
    <location>
        <begin position="551"/>
        <end position="587"/>
    </location>
</feature>
<feature type="domain" description="EGF-like 15; calcium-binding" evidence="3">
    <location>
        <begin position="589"/>
        <end position="625"/>
    </location>
</feature>
<feature type="domain" description="EGF-like 16" evidence="3">
    <location>
        <begin position="626"/>
        <end position="659"/>
    </location>
</feature>
<feature type="domain" description="EGF-like 17" evidence="3">
    <location>
        <begin position="661"/>
        <end position="689"/>
    </location>
</feature>
<feature type="domain" description="EGF-like 18" evidence="3">
    <location>
        <begin position="691"/>
        <end position="727"/>
    </location>
</feature>
<feature type="domain" description="EGF-like 19" evidence="3">
    <location>
        <begin position="729"/>
        <end position="765"/>
    </location>
</feature>
<feature type="domain" description="EGF-like 20" evidence="3">
    <location>
        <begin position="767"/>
        <end position="803"/>
    </location>
</feature>
<feature type="domain" description="EGF-like 21" evidence="3">
    <location>
        <begin position="806"/>
        <end position="842"/>
    </location>
</feature>
<feature type="domain" description="EGF-like 22" evidence="3">
    <location>
        <begin position="844"/>
        <end position="880"/>
    </location>
</feature>
<feature type="domain" description="EGF-like 23" evidence="3">
    <location>
        <begin position="882"/>
        <end position="928"/>
    </location>
</feature>
<feature type="domain" description="EGF-like 24" evidence="3">
    <location>
        <begin position="930"/>
        <end position="966"/>
    </location>
</feature>
<feature type="domain" description="EGF-like 25" evidence="3">
    <location>
        <begin position="968"/>
        <end position="1004"/>
    </location>
</feature>
<feature type="domain" description="EGF-like 26" evidence="3">
    <location>
        <begin position="1006"/>
        <end position="1044"/>
    </location>
</feature>
<feature type="domain" description="EGF-like 27" evidence="3">
    <location>
        <begin position="1046"/>
        <end position="1085"/>
    </location>
</feature>
<feature type="domain" description="EGF-like 28" evidence="3">
    <location>
        <begin position="1087"/>
        <end position="1126"/>
    </location>
</feature>
<feature type="domain" description="EGF-like 29" evidence="3">
    <location>
        <begin position="1130"/>
        <end position="1171"/>
    </location>
</feature>
<feature type="repeat" description="LNR 1">
    <location>
        <begin position="1170"/>
        <end position="1213"/>
    </location>
</feature>
<feature type="repeat" description="LNR 2">
    <location>
        <begin position="1214"/>
        <end position="1250"/>
    </location>
</feature>
<feature type="repeat" description="LNR 3">
    <location>
        <begin position="1251"/>
        <end position="1294"/>
    </location>
</feature>
<feature type="repeat" description="ANK 1">
    <location>
        <begin position="1633"/>
        <end position="1665"/>
    </location>
</feature>
<feature type="repeat" description="ANK 2">
    <location>
        <begin position="1666"/>
        <end position="1698"/>
    </location>
</feature>
<feature type="repeat" description="ANK 3">
    <location>
        <begin position="1700"/>
        <end position="1732"/>
    </location>
</feature>
<feature type="repeat" description="ANK 4">
    <location>
        <begin position="1733"/>
        <end position="1765"/>
    </location>
</feature>
<feature type="repeat" description="ANK 5">
    <location>
        <begin position="1766"/>
        <end position="1798"/>
    </location>
</feature>
<feature type="region of interest" description="Disordered" evidence="4">
    <location>
        <begin position="1347"/>
        <end position="1371"/>
    </location>
</feature>
<feature type="region of interest" description="Disordered" evidence="4">
    <location>
        <begin position="1485"/>
        <end position="1508"/>
    </location>
</feature>
<feature type="region of interest" description="Disordered" evidence="4">
    <location>
        <begin position="1900"/>
        <end position="1927"/>
    </location>
</feature>
<feature type="region of interest" description="Disordered" evidence="4">
    <location>
        <begin position="1968"/>
        <end position="2003"/>
    </location>
</feature>
<feature type="compositionally biased region" description="Basic residues" evidence="4">
    <location>
        <begin position="1489"/>
        <end position="1502"/>
    </location>
</feature>
<feature type="glycosylation site" description="N-linked (GlcNAc...) asparagine" evidence="2">
    <location>
        <position position="664"/>
    </location>
</feature>
<feature type="glycosylation site" description="N-linked (GlcNAc...) asparagine" evidence="2">
    <location>
        <position position="714"/>
    </location>
</feature>
<feature type="glycosylation site" description="N-linked (GlcNAc...) asparagine" evidence="2">
    <location>
        <position position="964"/>
    </location>
</feature>
<feature type="glycosylation site" description="N-linked (GlcNAc...) asparagine" evidence="2">
    <location>
        <position position="1143"/>
    </location>
</feature>
<feature type="disulfide bond" evidence="1">
    <location>
        <begin position="28"/>
        <end position="41"/>
    </location>
</feature>
<feature type="disulfide bond" evidence="1">
    <location>
        <begin position="35"/>
        <end position="51"/>
    </location>
</feature>
<feature type="disulfide bond" evidence="1">
    <location>
        <begin position="53"/>
        <end position="62"/>
    </location>
</feature>
<feature type="disulfide bond" evidence="1">
    <location>
        <begin position="68"/>
        <end position="80"/>
    </location>
</feature>
<feature type="disulfide bond" evidence="1">
    <location>
        <begin position="74"/>
        <end position="103"/>
    </location>
</feature>
<feature type="disulfide bond" evidence="1">
    <location>
        <begin position="105"/>
        <end position="114"/>
    </location>
</feature>
<feature type="disulfide bond" evidence="1">
    <location>
        <begin position="122"/>
        <end position="133"/>
    </location>
</feature>
<feature type="disulfide bond" evidence="1">
    <location>
        <begin position="127"/>
        <end position="143"/>
    </location>
</feature>
<feature type="disulfide bond" evidence="1">
    <location>
        <begin position="145"/>
        <end position="154"/>
    </location>
</feature>
<feature type="disulfide bond" evidence="1">
    <location>
        <begin position="160"/>
        <end position="171"/>
    </location>
</feature>
<feature type="disulfide bond" evidence="1">
    <location>
        <begin position="165"/>
        <end position="180"/>
    </location>
</feature>
<feature type="disulfide bond" evidence="1">
    <location>
        <begin position="182"/>
        <end position="191"/>
    </location>
</feature>
<feature type="disulfide bond" evidence="1">
    <location>
        <begin position="198"/>
        <end position="211"/>
    </location>
</feature>
<feature type="disulfide bond" evidence="1">
    <location>
        <begin position="205"/>
        <end position="220"/>
    </location>
</feature>
<feature type="disulfide bond" evidence="1">
    <location>
        <begin position="222"/>
        <end position="231"/>
    </location>
</feature>
<feature type="disulfide bond" evidence="1">
    <location>
        <begin position="238"/>
        <end position="249"/>
    </location>
</feature>
<feature type="disulfide bond" evidence="1">
    <location>
        <begin position="243"/>
        <end position="262"/>
    </location>
</feature>
<feature type="disulfide bond" evidence="1">
    <location>
        <begin position="264"/>
        <end position="273"/>
    </location>
</feature>
<feature type="disulfide bond" evidence="1">
    <location>
        <begin position="280"/>
        <end position="291"/>
    </location>
</feature>
<feature type="disulfide bond" evidence="1">
    <location>
        <begin position="285"/>
        <end position="300"/>
    </location>
</feature>
<feature type="disulfide bond" evidence="1">
    <location>
        <begin position="302"/>
        <end position="311"/>
    </location>
</feature>
<feature type="disulfide bond" evidence="1">
    <location>
        <begin position="318"/>
        <end position="332"/>
    </location>
</feature>
<feature type="disulfide bond" evidence="1">
    <location>
        <begin position="326"/>
        <end position="341"/>
    </location>
</feature>
<feature type="disulfide bond" evidence="1">
    <location>
        <begin position="343"/>
        <end position="352"/>
    </location>
</feature>
<feature type="disulfide bond" evidence="1">
    <location>
        <begin position="359"/>
        <end position="370"/>
    </location>
</feature>
<feature type="disulfide bond" evidence="1">
    <location>
        <begin position="364"/>
        <end position="379"/>
    </location>
</feature>
<feature type="disulfide bond" evidence="1">
    <location>
        <begin position="381"/>
        <end position="390"/>
    </location>
</feature>
<feature type="disulfide bond" evidence="1">
    <location>
        <begin position="396"/>
        <end position="407"/>
    </location>
</feature>
<feature type="disulfide bond" evidence="1">
    <location>
        <begin position="401"/>
        <end position="418"/>
    </location>
</feature>
<feature type="disulfide bond" evidence="1">
    <location>
        <begin position="420"/>
        <end position="429"/>
    </location>
</feature>
<feature type="disulfide bond" evidence="1">
    <location>
        <begin position="436"/>
        <end position="452"/>
    </location>
</feature>
<feature type="disulfide bond" evidence="1">
    <location>
        <begin position="446"/>
        <end position="461"/>
    </location>
</feature>
<feature type="disulfide bond" evidence="1">
    <location>
        <begin position="463"/>
        <end position="472"/>
    </location>
</feature>
<feature type="disulfide bond" evidence="1">
    <location>
        <begin position="479"/>
        <end position="490"/>
    </location>
</feature>
<feature type="disulfide bond" evidence="1">
    <location>
        <begin position="484"/>
        <end position="499"/>
    </location>
</feature>
<feature type="disulfide bond" evidence="1">
    <location>
        <begin position="501"/>
        <end position="510"/>
    </location>
</feature>
<feature type="disulfide bond" evidence="1">
    <location>
        <begin position="517"/>
        <end position="528"/>
    </location>
</feature>
<feature type="disulfide bond" evidence="1">
    <location>
        <begin position="522"/>
        <end position="537"/>
    </location>
</feature>
<feature type="disulfide bond" evidence="1">
    <location>
        <begin position="539"/>
        <end position="548"/>
    </location>
</feature>
<feature type="disulfide bond" evidence="1">
    <location>
        <begin position="555"/>
        <end position="566"/>
    </location>
</feature>
<feature type="disulfide bond" evidence="1">
    <location>
        <begin position="560"/>
        <end position="575"/>
    </location>
</feature>
<feature type="disulfide bond" evidence="1">
    <location>
        <begin position="577"/>
        <end position="586"/>
    </location>
</feature>
<feature type="disulfide bond" evidence="1">
    <location>
        <begin position="593"/>
        <end position="604"/>
    </location>
</feature>
<feature type="disulfide bond" evidence="1">
    <location>
        <begin position="598"/>
        <end position="613"/>
    </location>
</feature>
<feature type="disulfide bond" evidence="1">
    <location>
        <begin position="615"/>
        <end position="624"/>
    </location>
</feature>
<feature type="disulfide bond" evidence="1">
    <location>
        <begin position="629"/>
        <end position="640"/>
    </location>
</feature>
<feature type="disulfide bond" evidence="1">
    <location>
        <begin position="634"/>
        <end position="649"/>
    </location>
</feature>
<feature type="disulfide bond" evidence="1">
    <location>
        <begin position="651"/>
        <end position="658"/>
    </location>
</feature>
<feature type="disulfide bond" evidence="1">
    <location>
        <begin position="665"/>
        <end position="672"/>
    </location>
</feature>
<feature type="disulfide bond" evidence="1">
    <location>
        <begin position="667"/>
        <end position="677"/>
    </location>
</feature>
<feature type="disulfide bond" evidence="1">
    <location>
        <begin position="679"/>
        <end position="688"/>
    </location>
</feature>
<feature type="disulfide bond" evidence="1">
    <location>
        <begin position="695"/>
        <end position="706"/>
    </location>
</feature>
<feature type="disulfide bond" evidence="1">
    <location>
        <begin position="700"/>
        <end position="715"/>
    </location>
</feature>
<feature type="disulfide bond" evidence="1">
    <location>
        <begin position="717"/>
        <end position="726"/>
    </location>
</feature>
<feature type="disulfide bond" evidence="1">
    <location>
        <begin position="733"/>
        <end position="744"/>
    </location>
</feature>
<feature type="disulfide bond" evidence="1">
    <location>
        <begin position="738"/>
        <end position="753"/>
    </location>
</feature>
<feature type="disulfide bond" evidence="1">
    <location>
        <begin position="755"/>
        <end position="764"/>
    </location>
</feature>
<feature type="disulfide bond" evidence="1">
    <location>
        <begin position="771"/>
        <end position="782"/>
    </location>
</feature>
<feature type="disulfide bond" evidence="1">
    <location>
        <begin position="776"/>
        <end position="791"/>
    </location>
</feature>
<feature type="disulfide bond" evidence="1">
    <location>
        <begin position="793"/>
        <end position="802"/>
    </location>
</feature>
<feature type="disulfide bond" evidence="1">
    <location>
        <begin position="810"/>
        <end position="821"/>
    </location>
</feature>
<feature type="disulfide bond" evidence="1">
    <location>
        <begin position="815"/>
        <end position="830"/>
    </location>
</feature>
<feature type="disulfide bond" evidence="1">
    <location>
        <begin position="832"/>
        <end position="841"/>
    </location>
</feature>
<feature type="disulfide bond" evidence="1">
    <location>
        <begin position="848"/>
        <end position="859"/>
    </location>
</feature>
<feature type="disulfide bond" evidence="1">
    <location>
        <begin position="853"/>
        <end position="868"/>
    </location>
</feature>
<feature type="disulfide bond" evidence="1">
    <location>
        <begin position="870"/>
        <end position="879"/>
    </location>
</feature>
<feature type="disulfide bond" evidence="1">
    <location>
        <begin position="886"/>
        <end position="907"/>
    </location>
</feature>
<feature type="disulfide bond" evidence="1">
    <location>
        <begin position="901"/>
        <end position="916"/>
    </location>
</feature>
<feature type="disulfide bond" evidence="1">
    <location>
        <begin position="918"/>
        <end position="927"/>
    </location>
</feature>
<feature type="disulfide bond" evidence="1">
    <location>
        <begin position="934"/>
        <end position="945"/>
    </location>
</feature>
<feature type="disulfide bond" evidence="1">
    <location>
        <begin position="939"/>
        <end position="954"/>
    </location>
</feature>
<feature type="disulfide bond" evidence="1">
    <location>
        <begin position="956"/>
        <end position="965"/>
    </location>
</feature>
<feature type="disulfide bond" evidence="1">
    <location>
        <begin position="972"/>
        <end position="983"/>
    </location>
</feature>
<feature type="disulfide bond" evidence="1">
    <location>
        <begin position="977"/>
        <end position="992"/>
    </location>
</feature>
<feature type="disulfide bond" evidence="1">
    <location>
        <begin position="994"/>
        <end position="1003"/>
    </location>
</feature>
<feature type="disulfide bond" evidence="1">
    <location>
        <begin position="1010"/>
        <end position="1023"/>
    </location>
</feature>
<feature type="disulfide bond" evidence="1">
    <location>
        <begin position="1015"/>
        <end position="1032"/>
    </location>
</feature>
<feature type="disulfide bond" evidence="1">
    <location>
        <begin position="1034"/>
        <end position="1043"/>
    </location>
</feature>
<feature type="disulfide bond" evidence="1">
    <location>
        <begin position="1050"/>
        <end position="1061"/>
    </location>
</feature>
<feature type="disulfide bond" evidence="1">
    <location>
        <begin position="1055"/>
        <end position="1073"/>
    </location>
</feature>
<feature type="disulfide bond" evidence="1">
    <location>
        <begin position="1075"/>
        <end position="1084"/>
    </location>
</feature>
<feature type="disulfide bond" evidence="1">
    <location>
        <begin position="1091"/>
        <end position="1102"/>
    </location>
</feature>
<feature type="disulfide bond" evidence="1">
    <location>
        <begin position="1096"/>
        <end position="1114"/>
    </location>
</feature>
<feature type="disulfide bond" evidence="1">
    <location>
        <begin position="1116"/>
        <end position="1125"/>
    </location>
</feature>
<feature type="disulfide bond" evidence="1">
    <location>
        <begin position="1134"/>
        <end position="1146"/>
    </location>
</feature>
<feature type="disulfide bond" evidence="1">
    <location>
        <begin position="1140"/>
        <end position="1159"/>
    </location>
</feature>
<feature type="disulfide bond" evidence="1">
    <location>
        <begin position="1161"/>
        <end position="1170"/>
    </location>
</feature>
<feature type="disulfide bond" evidence="1">
    <location>
        <begin position="1178"/>
        <end position="1191"/>
    </location>
</feature>
<feature type="disulfide bond" evidence="1">
    <location>
        <begin position="1187"/>
        <end position="1203"/>
    </location>
</feature>
<feature type="disulfide bond" evidence="1">
    <location>
        <begin position="1214"/>
        <end position="1238"/>
    </location>
</feature>
<feature type="disulfide bond" evidence="1">
    <location>
        <begin position="1220"/>
        <end position="1233"/>
    </location>
</feature>
<feature type="disulfide bond" evidence="1">
    <location>
        <begin position="1229"/>
        <end position="1245"/>
    </location>
</feature>
<feature type="disulfide bond" evidence="1">
    <location>
        <begin position="1251"/>
        <end position="1277"/>
    </location>
</feature>
<feature type="disulfide bond" evidence="1">
    <location>
        <begin position="1259"/>
        <end position="1272"/>
    </location>
</feature>
<feature type="disulfide bond" evidence="1">
    <location>
        <begin position="1268"/>
        <end position="1284"/>
    </location>
</feature>
<feature type="splice variant" id="VSP_001406" description="In isoform 2." evidence="11">
    <location>
        <begin position="1"/>
        <end position="1414"/>
    </location>
</feature>
<feature type="splice variant" id="VSP_001407" description="In isoform 3." evidence="11">
    <location>
        <begin position="378"/>
        <end position="2003"/>
    </location>
</feature>
<feature type="sequence variant" id="VAR_012866" description="In dbSNP:rs915894." evidence="8 10">
    <original>K</original>
    <variation>Q</variation>
    <location>
        <position position="117"/>
    </location>
</feature>
<feature type="sequence variant" id="VAR_033828" description="In dbSNP:rs2071282.">
    <original>P</original>
    <variation>L</variation>
    <location>
        <position position="204"/>
    </location>
</feature>
<feature type="sequence variant" id="VAR_033829" description="In dbSNP:rs2071282.">
    <original>P</original>
    <variation>L</variation>
    <location>
        <position position="206"/>
    </location>
</feature>
<feature type="sequence variant" id="VAR_033830" description="In dbSNP:rs8192585.">
    <original>S</original>
    <variation>L</variation>
    <location>
        <position position="244"/>
    </location>
</feature>
<feature type="sequence variant" id="VAR_012867" description="In dbSNP:rs520692.">
    <original>D</original>
    <variation>G</variation>
    <location>
        <position position="272"/>
    </location>
</feature>
<feature type="sequence variant" id="VAR_059271" description="In dbSNP:rs520803.">
    <original>Q</original>
    <variation>H</variation>
    <location>
        <position position="284"/>
    </location>
</feature>
<feature type="sequence variant" id="VAR_012868" evidence="10">
    <original>E</original>
    <variation>Q</variation>
    <location>
        <position position="317"/>
    </location>
</feature>
<feature type="sequence variant" id="VAR_012869" description="In dbSNP:rs422951.">
    <original>T</original>
    <variation>A</variation>
    <location>
        <position position="320"/>
    </location>
</feature>
<feature type="sequence variant" id="VAR_033831" description="In dbSNP:rs8192591.">
    <original>G</original>
    <variation>S</variation>
    <location>
        <position position="534"/>
    </location>
</feature>
<feature type="sequence variant" id="VAR_048991" description="In dbSNP:rs3132961.">
    <original>S</original>
    <variation>I</variation>
    <location>
        <position position="809"/>
    </location>
</feature>
<feature type="sequence variant" id="VAR_012870" description="In dbSNP:rs2022060.">
    <original>K</original>
    <variation>R</variation>
    <location>
        <position position="851"/>
    </location>
</feature>
<feature type="sequence variant" id="VAR_048992" description="In dbSNP:rs17604492.">
    <original>G</original>
    <variation>R</variation>
    <location>
        <position position="942"/>
    </location>
</feature>
<feature type="sequence variant" id="VAR_048993" description="In dbSNP:rs8192573.">
    <original>R</original>
    <variation>P</variation>
    <location>
        <position position="1346"/>
    </location>
</feature>
<feature type="sequence conflict" description="In Ref. 1; BAA09708." evidence="12" ref="1">
    <original>A</original>
    <variation>V</variation>
    <location>
        <position position="1431"/>
    </location>
</feature>
<feature type="sequence conflict" description="In Ref. 1; BAA09708." evidence="12" ref="1">
    <original>A</original>
    <variation>E</variation>
    <location>
        <position position="1436"/>
    </location>
</feature>
<feature type="sequence conflict" description="In Ref. 1; BAA09708." evidence="12" ref="1">
    <original>L</original>
    <variation>F</variation>
    <location>
        <position position="1445"/>
    </location>
</feature>
<feature type="sequence conflict" description="In Ref. 2; AAC63097." evidence="12" ref="2">
    <location>
        <begin position="1537"/>
        <end position="1539"/>
    </location>
</feature>
<feature type="sequence conflict" description="In Ref. 1; BAA09708." evidence="12" ref="1">
    <original>G</original>
    <variation>A</variation>
    <location>
        <position position="1538"/>
    </location>
</feature>
<feature type="helix" evidence="14">
    <location>
        <begin position="1918"/>
        <end position="1920"/>
    </location>
</feature>
<comment type="function">
    <text evidence="1">Functions as a receptor for membrane-bound ligands Jagged1, Jagged2 and Delta1 to regulate cell-fate determination. Upon ligand activation through the released notch intracellular domain (NICD) it forms a transcriptional activator complex with RBPJ/RBPSUH and activates genes of the enhancer of split locus. Affects the implementation of differentiation, proliferation and apoptotic programs. May regulate branching morphogenesis in the developing vascular system (By similarity).</text>
</comment>
<comment type="subunit">
    <text evidence="1 5 7">Heterodimer of a C-terminal fragment N(TM) and a N-terminal fragment N(EC) which are probably linked by disulfide bonds (By similarity). Interacts with MAML1, MAML2 and MAML3 which act as transcriptional coactivators for NOTCH4.</text>
</comment>
<comment type="subunit">
    <text evidence="6">(Microbial infection) Interacts with Epstein-Barr virus (EBV) RK-BARF0.</text>
</comment>
<comment type="interaction">
    <interactant intactId="EBI-7970822">
        <id>Q99466</id>
    </interactant>
    <interactant intactId="EBI-77613">
        <id>P05067</id>
        <label>APP</label>
    </interactant>
    <organismsDiffer>false</organismsDiffer>
    <experiments>3</experiments>
</comment>
<comment type="subcellular location">
    <subcellularLocation>
        <location>Cell membrane</location>
        <topology>Single-pass type I membrane protein</topology>
    </subcellularLocation>
</comment>
<comment type="subcellular location">
    <molecule>Notch 4 intracellular domain</molecule>
    <subcellularLocation>
        <location>Nucleus</location>
    </subcellularLocation>
    <text>Following proteolytical processing NICD is translocated to the nucleus.</text>
</comment>
<comment type="alternative products">
    <event type="alternative splicing"/>
    <isoform>
        <id>Q99466-1</id>
        <name>1</name>
        <sequence type="displayed"/>
    </isoform>
    <isoform>
        <id>Q99466-2</id>
        <name>2</name>
        <sequence type="described" ref="VSP_001406"/>
    </isoform>
    <isoform>
        <id>Q99466-3</id>
        <name>3</name>
        <sequence type="described" ref="VSP_001407"/>
    </isoform>
    <text>Experimental confirmation may be lacking for some isoforms.</text>
</comment>
<comment type="tissue specificity">
    <text>Highly expressed in the heart, moderately in the lung and placenta and at low levels in the liver, skeletal muscle, kidney, pancreas, spleen, lymph node, thymus, bone marrow and fetal liver. No expression was seen in adult brain or peripheral blood leukocytes.</text>
</comment>
<comment type="PTM">
    <text evidence="1">Synthesized in the endoplasmic reticulum as an inactive form which is proteolytically cleaved by a furin-like convertase in the trans-Golgi network before it reaches the plasma membrane to yield an active, ligand-accessible form. Cleavage results in a C-terminal fragment N(TM) and a N-terminal fragment N(EC). Following ligand binding, it is cleaved by TNF-alpha converting enzyme (TACE) to yield a membrane-associated intermediate fragment called notch extracellular truncation (NEXT). This fragment is then cleaved by presenilin dependent gamma-secretase to release a notch-derived peptide containing the intracellular domain (NICD) from the membrane (By similarity).</text>
</comment>
<comment type="PTM">
    <text evidence="1">Phosphorylated.</text>
</comment>
<comment type="polymorphism">
    <text evidence="9">The poly-Leu region of NOTCH4 (in the signal peptide) is polymorphic and the number of Leu varies in the population (from 6 to 12).</text>
</comment>
<comment type="similarity">
    <text evidence="12">Belongs to the NOTCH family.</text>
</comment>
<comment type="sequence caution" evidence="12">
    <conflict type="frameshift">
        <sequence resource="EMBL-CDS" id="BAA09708"/>
    </conflict>
</comment>
<sequence length="2003" mass="209622">MQPPSLLLLLLLLLLLCVSVVRPRGLLCGSFPEPCANGGTCLSLSLGQGTCQCAPGFLGETCQFPDPCQNAQLCQNGGSCQALLPAPLGLPSSPSPLTPSFLCTCLPGFTGERCQAKLEDPCPPSFCSKRGRCHIQASGRPQCSCMPGWTGEQCQLRDFCSANPCVNGGVCLATYPQIQCHCPPGFEGHACERDVNECFQDPGPCPKGTSCHNTLGSFQCLCPVGQEGPRCELRAGPCPPRGCSNGGTCQLMPEKDSTFHLCLCPPGFIGPDCEVNPDNCVSHQCQNGGTCQDGLDTYTCLCPETWTGWDCSEDVDECETQGPPHCRNGGTCQNSAGSFHCVCVSGWGGTSCEENLDDCIAATCAPGSTCIDRVGSFSCLCPPGRTGLLCHLEDMCLSQPCHGDAQCSTNPLTGSTLCLCQPGYSGPTCHQDLDECLMAQQGPSPCEHGGSCLNTPGSFNCLCPPGYTGSRCEADHNECLSQPCHPGSTCLDLLATFHCLCPPGLEGQLCEVETNECASAPCLNHADCHDLLNGFQCICLPGFSGTRCEEDIDECRSSPCANGGQCQDQPGAFHCKCLPGFEGPRCQTEVDECLSDPCPVGASCLDLPGAFFCLCPSGFTGQLCEVPLCAPNLCQPKQICKDQKDKANCLCPDGSPGCAPPEDNCTCHHGHCQRSSCVCDVGWTGPECEAELGGCISAPCAHGGTCYPQPSGYNCTCPTGYTGPTCSEEMTACHSGPCLNGGSCNPSPGGYYCTCPPSHTGPQCQTSTDYCVSAPCFNGGTCVNRPGTFSCLCAMGFQGPRCEGKLRPSCADSPCRNRATCQDSPQGPRCLCPTGYTGGSCQTLMDLCAQKPCPRNSHCLQTGPSFHCLCLQGWTGPLCNLPLSSCQKAALSQGIDVSSLCHNGGLCVDSGPSYFCHCPPGFQGSLCQDHVNPCESRPCQNGATCMAQPSGYLCQCAPGYDGQNCSKELDACQSQPCHNHGTCTPKPGGFHCACPPGFVGLRCEGDVDECLDQPCHPTGTAACHSLANAFYCQCLPGHTGQWCEVEIDPCHSQPCFHGGTCEATAGSPLGFICHCPKGFEGPTCSHRAPSCGFHHCHHGGLCLPSPKPGFPPRCACLSGYGGPDCLTPPAPKGCGPPSPCLYNGSCSETTGLGGPGFRCSCPHSSPGPRCQKPGAKGCEGRSGDGACDAGCSGPGGNWDGGDCSLGVPDPWKGCPSHSRCWLLFRDGQCHPQCDSEECLFDGYDCETPPACTPAYDQYCHDHFHNGHCEKGCNTAECGWDGGDCRPEDGDPEWGPSLALLVVLSPPALDQQLFALARVLSLTLRVGLWVRKDRDGRDMVYPYPGARAEEKLGGTRDPTYQERAAPQTQPLGKETDSLSAGFVVVMGVDLSRCGPDHPASRCPWDPGLLLRFLAAMAAVGALEPLLPGPLLAVHPHAGTAPPANQLPWPVLCSPVAGVILLALGALLVLQLIRRRRREHGALWLPPGFTRRPRTQSAPHRRRPPLGEDSIGLKALKPKAEVDEDGVVMCSGPEEGEEVGQAEETGPPSTCQLWSLSGGCGALPQAAMLTPPQESEMEAPDLDTRGPDGVTPLMSAVCCGEVQSGTFQGAWLGCPEPWEPLLDGGACPQAHTVGTGETPLHLAARFSRPTAARRLLEAGANPNQPDRAGRTPLHAAVAADAREVCQLLLRSRQTAVDARTEDGTTPLMLAARLAVEDLVEELIAAQADVGARDKWGKTALHWAAAVNNARAARSLLQAGADKDAQDNREQTPLFLAAREGAVEVAQLLLGLGAARELRDQAGLAPADVAHQRNHWDLLTLLEGAGPPEARHKATPGREAGPFPRARTVSVSVPPHGGGALPRCRTLSAGAGPRGGGACLQARTWSVDLAARGGGAYSHCRSLSGVGAGGGPTPRGRRFSAGMRGPRPNPAIMRGRYGVAAGRGGRVSTDDWPCDWVALGACGSASNIPIPPPCLTPSPERGSPQLDCGPPALQEMPINQGGEGKK</sequence>
<name>NOTC4_HUMAN</name>
<dbReference type="EMBL" id="D63395">
    <property type="protein sequence ID" value="BAA09708.1"/>
    <property type="status" value="ALT_FRAME"/>
    <property type="molecule type" value="mRNA"/>
</dbReference>
<dbReference type="EMBL" id="D86566">
    <property type="protein sequence ID" value="BAA13116.1"/>
    <property type="molecule type" value="Genomic_DNA"/>
</dbReference>
<dbReference type="EMBL" id="U95299">
    <property type="protein sequence ID" value="AAC32288.1"/>
    <property type="molecule type" value="mRNA"/>
</dbReference>
<dbReference type="EMBL" id="U89335">
    <property type="protein sequence ID" value="AAC63097.1"/>
    <property type="molecule type" value="Genomic_DNA"/>
</dbReference>
<dbReference type="EMBL" id="AL662884">
    <property type="status" value="NOT_ANNOTATED_CDS"/>
    <property type="molecule type" value="Genomic_DNA"/>
</dbReference>
<dbReference type="EMBL" id="BX284686">
    <property type="status" value="NOT_ANNOTATED_CDS"/>
    <property type="molecule type" value="Genomic_DNA"/>
</dbReference>
<dbReference type="EMBL" id="BX284927">
    <property type="status" value="NOT_ANNOTATED_CDS"/>
    <property type="molecule type" value="Genomic_DNA"/>
</dbReference>
<dbReference type="EMBL" id="CR812478">
    <property type="status" value="NOT_ANNOTATED_CDS"/>
    <property type="molecule type" value="Genomic_DNA"/>
</dbReference>
<dbReference type="EMBL" id="CR933878">
    <property type="status" value="NOT_ANNOTATED_CDS"/>
    <property type="molecule type" value="Genomic_DNA"/>
</dbReference>
<dbReference type="EMBL" id="AB023961">
    <property type="protein sequence ID" value="BAB20317.1"/>
    <property type="molecule type" value="Genomic_DNA"/>
</dbReference>
<dbReference type="EMBL" id="AB024520">
    <property type="protein sequence ID" value="BAA88951.1"/>
    <property type="molecule type" value="Genomic_DNA"/>
</dbReference>
<dbReference type="EMBL" id="AB024578">
    <property type="protein sequence ID" value="BAA88952.1"/>
    <property type="molecule type" value="Genomic_DNA"/>
</dbReference>
<dbReference type="CCDS" id="CCDS34420.1">
    <molecule id="Q99466-1"/>
</dbReference>
<dbReference type="RefSeq" id="NP_004548.3">
    <molecule id="Q99466-1"/>
    <property type="nucleotide sequence ID" value="NM_004557.3"/>
</dbReference>
<dbReference type="PDB" id="7OR3">
    <property type="method" value="X-ray"/>
    <property type="resolution" value="1.80 A"/>
    <property type="chains" value="B=1912-1922"/>
</dbReference>
<dbReference type="PDB" id="7OR5">
    <property type="method" value="X-ray"/>
    <property type="resolution" value="1.80 A"/>
    <property type="chains" value="B=1912-1922"/>
</dbReference>
<dbReference type="PDB" id="7OR7">
    <property type="method" value="X-ray"/>
    <property type="resolution" value="1.80 A"/>
    <property type="chains" value="B=1912-1922"/>
</dbReference>
<dbReference type="PDBsum" id="7OR3"/>
<dbReference type="PDBsum" id="7OR5"/>
<dbReference type="PDBsum" id="7OR7"/>
<dbReference type="SMR" id="Q99466"/>
<dbReference type="BioGRID" id="110917">
    <property type="interactions" value="11"/>
</dbReference>
<dbReference type="CORUM" id="Q99466"/>
<dbReference type="ELM" id="Q99466"/>
<dbReference type="FunCoup" id="Q99466">
    <property type="interactions" value="246"/>
</dbReference>
<dbReference type="IntAct" id="Q99466">
    <property type="interactions" value="3"/>
</dbReference>
<dbReference type="MINT" id="Q99466"/>
<dbReference type="STRING" id="9606.ENSP00000364163"/>
<dbReference type="BindingDB" id="Q99466"/>
<dbReference type="ChEMBL" id="CHEMBL3407321"/>
<dbReference type="DrugBank" id="DB12050">
    <property type="generic name" value="LY-3039478"/>
</dbReference>
<dbReference type="GlyCosmos" id="Q99466">
    <property type="glycosylation" value="6 sites, 2 glycans"/>
</dbReference>
<dbReference type="GlyGen" id="Q99466">
    <property type="glycosylation" value="10 sites, 2 O-linked glycans (2 sites)"/>
</dbReference>
<dbReference type="iPTMnet" id="Q99466"/>
<dbReference type="PhosphoSitePlus" id="Q99466"/>
<dbReference type="BioMuta" id="NOTCH4"/>
<dbReference type="DMDM" id="20139103"/>
<dbReference type="jPOST" id="Q99466"/>
<dbReference type="MassIVE" id="Q99466"/>
<dbReference type="PaxDb" id="9606-ENSP00000364163"/>
<dbReference type="PeptideAtlas" id="Q99466"/>
<dbReference type="ProteomicsDB" id="78281">
    <molecule id="Q99466-1"/>
</dbReference>
<dbReference type="ProteomicsDB" id="78282">
    <molecule id="Q99466-2"/>
</dbReference>
<dbReference type="ProteomicsDB" id="78283">
    <molecule id="Q99466-3"/>
</dbReference>
<dbReference type="ABCD" id="Q99466">
    <property type="antibodies" value="8 sequenced antibodies"/>
</dbReference>
<dbReference type="Antibodypedia" id="3228">
    <property type="antibodies" value="327 antibodies from 36 providers"/>
</dbReference>
<dbReference type="DNASU" id="4855"/>
<dbReference type="Ensembl" id="ENST00000375023.3">
    <molecule id="Q99466-1"/>
    <property type="protein sequence ID" value="ENSP00000364163.3"/>
    <property type="gene ID" value="ENSG00000204301.6"/>
</dbReference>
<dbReference type="Ensembl" id="ENST00000425600.1">
    <property type="protein sequence ID" value="ENSP00000401321.1"/>
    <property type="gene ID" value="ENSG00000238196.5"/>
</dbReference>
<dbReference type="Ensembl" id="ENST00000439349.2">
    <property type="protein sequence ID" value="ENSP00000408335.2"/>
    <property type="gene ID" value="ENSG00000223355.5"/>
</dbReference>
<dbReference type="Ensembl" id="ENST00000457094.2">
    <molecule id="Q99466-1"/>
    <property type="protein sequence ID" value="ENSP00000403447.2"/>
    <property type="gene ID" value="ENSG00000234876.5"/>
</dbReference>
<dbReference type="GeneID" id="4855"/>
<dbReference type="KEGG" id="hsa:4855"/>
<dbReference type="MANE-Select" id="ENST00000375023.3">
    <property type="protein sequence ID" value="ENSP00000364163.3"/>
    <property type="RefSeq nucleotide sequence ID" value="NM_004557.4"/>
    <property type="RefSeq protein sequence ID" value="NP_004548.3"/>
</dbReference>
<dbReference type="UCSC" id="uc003obb.3">
    <molecule id="Q99466-1"/>
    <property type="organism name" value="human"/>
</dbReference>
<dbReference type="AGR" id="HGNC:7884"/>
<dbReference type="CTD" id="4855"/>
<dbReference type="DisGeNET" id="4855"/>
<dbReference type="GeneCards" id="NOTCH4"/>
<dbReference type="HGNC" id="HGNC:7884">
    <property type="gene designation" value="NOTCH4"/>
</dbReference>
<dbReference type="HPA" id="ENSG00000204301">
    <property type="expression patterns" value="Tissue enhanced (adipose)"/>
</dbReference>
<dbReference type="MalaCards" id="NOTCH4"/>
<dbReference type="MIM" id="164951">
    <property type="type" value="gene"/>
</dbReference>
<dbReference type="neXtProt" id="NX_Q99466"/>
<dbReference type="OpenTargets" id="ENSG00000204301"/>
<dbReference type="PharmGKB" id="PA31686"/>
<dbReference type="VEuPathDB" id="HostDB:ENSG00000204301"/>
<dbReference type="eggNOG" id="KOG1217">
    <property type="taxonomic scope" value="Eukaryota"/>
</dbReference>
<dbReference type="GeneTree" id="ENSGT00940000163287"/>
<dbReference type="HOGENOM" id="CLU_000576_0_0_1"/>
<dbReference type="InParanoid" id="Q99466"/>
<dbReference type="OMA" id="ACPQVHT"/>
<dbReference type="OrthoDB" id="20872at2759"/>
<dbReference type="PAN-GO" id="Q99466">
    <property type="GO annotations" value="1 GO annotation based on evolutionary models"/>
</dbReference>
<dbReference type="PhylomeDB" id="Q99466"/>
<dbReference type="TreeFam" id="TF351641"/>
<dbReference type="PathwayCommons" id="Q99466"/>
<dbReference type="Reactome" id="R-HSA-1912399">
    <property type="pathway name" value="Pre-NOTCH Processing in the Endoplasmic Reticulum"/>
</dbReference>
<dbReference type="Reactome" id="R-HSA-1912408">
    <property type="pathway name" value="Pre-NOTCH Transcription and Translation"/>
</dbReference>
<dbReference type="Reactome" id="R-HSA-1912420">
    <property type="pathway name" value="Pre-NOTCH Processing in Golgi"/>
</dbReference>
<dbReference type="Reactome" id="R-HSA-350054">
    <property type="pathway name" value="Notch-HLH transcription pathway"/>
</dbReference>
<dbReference type="Reactome" id="R-HSA-5083630">
    <property type="pathway name" value="Defective LFNG causes SCDO3"/>
</dbReference>
<dbReference type="Reactome" id="R-HSA-9013695">
    <property type="pathway name" value="NOTCH4 Intracellular Domain Regulates Transcription"/>
</dbReference>
<dbReference type="Reactome" id="R-HSA-9013700">
    <property type="pathway name" value="NOTCH4 Activation and Transmission of Signal to the Nucleus"/>
</dbReference>
<dbReference type="Reactome" id="R-HSA-9604323">
    <property type="pathway name" value="Negative regulation of NOTCH4 signaling"/>
</dbReference>
<dbReference type="SignaLink" id="Q99466"/>
<dbReference type="SIGNOR" id="Q99466"/>
<dbReference type="BioGRID-ORCS" id="4855">
    <property type="hits" value="12 hits in 1160 CRISPR screens"/>
</dbReference>
<dbReference type="ChiTaRS" id="NOTCH4">
    <property type="organism name" value="human"/>
</dbReference>
<dbReference type="GeneWiki" id="NOTCH4"/>
<dbReference type="GenomeRNAi" id="4855"/>
<dbReference type="Pharos" id="Q99466">
    <property type="development level" value="Tchem"/>
</dbReference>
<dbReference type="PRO" id="PR:Q99466"/>
<dbReference type="Proteomes" id="UP000005640">
    <property type="component" value="Chromosome 6"/>
</dbReference>
<dbReference type="RNAct" id="Q99466">
    <property type="molecule type" value="protein"/>
</dbReference>
<dbReference type="Bgee" id="ENSG00000204301">
    <property type="expression patterns" value="Expressed in apex of heart and 92 other cell types or tissues"/>
</dbReference>
<dbReference type="ExpressionAtlas" id="Q99466">
    <property type="expression patterns" value="baseline and differential"/>
</dbReference>
<dbReference type="GO" id="GO:0009986">
    <property type="term" value="C:cell surface"/>
    <property type="evidence" value="ECO:0000314"/>
    <property type="project" value="UniProtKB"/>
</dbReference>
<dbReference type="GO" id="GO:0005829">
    <property type="term" value="C:cytosol"/>
    <property type="evidence" value="ECO:0000304"/>
    <property type="project" value="Reactome"/>
</dbReference>
<dbReference type="GO" id="GO:0005789">
    <property type="term" value="C:endoplasmic reticulum membrane"/>
    <property type="evidence" value="ECO:0000304"/>
    <property type="project" value="Reactome"/>
</dbReference>
<dbReference type="GO" id="GO:0005576">
    <property type="term" value="C:extracellular region"/>
    <property type="evidence" value="ECO:0000304"/>
    <property type="project" value="Reactome"/>
</dbReference>
<dbReference type="GO" id="GO:0000139">
    <property type="term" value="C:Golgi membrane"/>
    <property type="evidence" value="ECO:0000304"/>
    <property type="project" value="Reactome"/>
</dbReference>
<dbReference type="GO" id="GO:0005654">
    <property type="term" value="C:nucleoplasm"/>
    <property type="evidence" value="ECO:0000304"/>
    <property type="project" value="Reactome"/>
</dbReference>
<dbReference type="GO" id="GO:0005634">
    <property type="term" value="C:nucleus"/>
    <property type="evidence" value="ECO:0000304"/>
    <property type="project" value="UniProtKB"/>
</dbReference>
<dbReference type="GO" id="GO:0005886">
    <property type="term" value="C:plasma membrane"/>
    <property type="evidence" value="ECO:0000304"/>
    <property type="project" value="UniProtKB"/>
</dbReference>
<dbReference type="GO" id="GO:0005509">
    <property type="term" value="F:calcium ion binding"/>
    <property type="evidence" value="ECO:0000304"/>
    <property type="project" value="UniProtKB"/>
</dbReference>
<dbReference type="GO" id="GO:0000987">
    <property type="term" value="F:cis-regulatory region sequence-specific DNA binding"/>
    <property type="evidence" value="ECO:0000314"/>
    <property type="project" value="BHF-UCL"/>
</dbReference>
<dbReference type="GO" id="GO:0001228">
    <property type="term" value="F:DNA-binding transcription activator activity, RNA polymerase II-specific"/>
    <property type="evidence" value="ECO:0000314"/>
    <property type="project" value="BHF-UCL"/>
</dbReference>
<dbReference type="GO" id="GO:0005112">
    <property type="term" value="F:Notch binding"/>
    <property type="evidence" value="ECO:0000318"/>
    <property type="project" value="GO_Central"/>
</dbReference>
<dbReference type="GO" id="GO:0038023">
    <property type="term" value="F:signaling receptor activity"/>
    <property type="evidence" value="ECO:0000304"/>
    <property type="project" value="UniProtKB"/>
</dbReference>
<dbReference type="GO" id="GO:0001569">
    <property type="term" value="P:branching involved in blood vessel morphogenesis"/>
    <property type="evidence" value="ECO:0000250"/>
    <property type="project" value="UniProtKB"/>
</dbReference>
<dbReference type="GO" id="GO:0030154">
    <property type="term" value="P:cell differentiation"/>
    <property type="evidence" value="ECO:0000303"/>
    <property type="project" value="UniProtKB"/>
</dbReference>
<dbReference type="GO" id="GO:0001709">
    <property type="term" value="P:cell fate determination"/>
    <property type="evidence" value="ECO:0000304"/>
    <property type="project" value="UniProtKB"/>
</dbReference>
<dbReference type="GO" id="GO:0001886">
    <property type="term" value="P:endothelial cell morphogenesis"/>
    <property type="evidence" value="ECO:0007669"/>
    <property type="project" value="Ensembl"/>
</dbReference>
<dbReference type="GO" id="GO:0001837">
    <property type="term" value="P:epithelial to mesenchymal transition"/>
    <property type="evidence" value="ECO:0000315"/>
    <property type="project" value="ARUK-UCL"/>
</dbReference>
<dbReference type="GO" id="GO:0030097">
    <property type="term" value="P:hemopoiesis"/>
    <property type="evidence" value="ECO:0000304"/>
    <property type="project" value="UniProtKB"/>
</dbReference>
<dbReference type="GO" id="GO:0001554">
    <property type="term" value="P:luteolysis"/>
    <property type="evidence" value="ECO:0007669"/>
    <property type="project" value="Ensembl"/>
</dbReference>
<dbReference type="GO" id="GO:0030879">
    <property type="term" value="P:mammary gland development"/>
    <property type="evidence" value="ECO:0000314"/>
    <property type="project" value="UniProtKB"/>
</dbReference>
<dbReference type="GO" id="GO:0001763">
    <property type="term" value="P:morphogenesis of a branching structure"/>
    <property type="evidence" value="ECO:0000250"/>
    <property type="project" value="UniProtKB"/>
</dbReference>
<dbReference type="GO" id="GO:0060354">
    <property type="term" value="P:negative regulation of cell adhesion molecule production"/>
    <property type="evidence" value="ECO:0000315"/>
    <property type="project" value="ARUK-UCL"/>
</dbReference>
<dbReference type="GO" id="GO:0045596">
    <property type="term" value="P:negative regulation of cell differentiation"/>
    <property type="evidence" value="ECO:0000303"/>
    <property type="project" value="UniProtKB"/>
</dbReference>
<dbReference type="GO" id="GO:2000048">
    <property type="term" value="P:negative regulation of cell-cell adhesion mediated by cadherin"/>
    <property type="evidence" value="ECO:0000315"/>
    <property type="project" value="ARUK-UCL"/>
</dbReference>
<dbReference type="GO" id="GO:0045602">
    <property type="term" value="P:negative regulation of endothelial cell differentiation"/>
    <property type="evidence" value="ECO:0000250"/>
    <property type="project" value="UniProtKB"/>
</dbReference>
<dbReference type="GO" id="GO:0000122">
    <property type="term" value="P:negative regulation of transcription by RNA polymerase II"/>
    <property type="evidence" value="ECO:0000315"/>
    <property type="project" value="ARUK-UCL"/>
</dbReference>
<dbReference type="GO" id="GO:0045893">
    <property type="term" value="P:positive regulation of DNA-templated transcription"/>
    <property type="evidence" value="ECO:0000304"/>
    <property type="project" value="UniProtKB"/>
</dbReference>
<dbReference type="GO" id="GO:0051152">
    <property type="term" value="P:positive regulation of smooth muscle cell differentiation"/>
    <property type="evidence" value="ECO:0000314"/>
    <property type="project" value="BHF-UCL"/>
</dbReference>
<dbReference type="GO" id="GO:0045944">
    <property type="term" value="P:positive regulation of transcription by RNA polymerase II"/>
    <property type="evidence" value="ECO:0000314"/>
    <property type="project" value="BHF-UCL"/>
</dbReference>
<dbReference type="GO" id="GO:0007221">
    <property type="term" value="P:positive regulation of transcription of Notch receptor target"/>
    <property type="evidence" value="ECO:0000304"/>
    <property type="project" value="BHF-UCL"/>
</dbReference>
<dbReference type="GO" id="GO:0001944">
    <property type="term" value="P:vasculature development"/>
    <property type="evidence" value="ECO:0000250"/>
    <property type="project" value="UniProtKB"/>
</dbReference>
<dbReference type="CDD" id="cd00054">
    <property type="entry name" value="EGF_CA"/>
    <property type="match status" value="18"/>
</dbReference>
<dbReference type="CDD" id="cd21705">
    <property type="entry name" value="JMTM_Notch4"/>
    <property type="match status" value="1"/>
</dbReference>
<dbReference type="FunFam" id="2.10.25.10:FF:000185">
    <property type="entry name" value="basement membrane-specific heparan sulfate proteoglycan core protein-like"/>
    <property type="match status" value="1"/>
</dbReference>
<dbReference type="FunFam" id="2.10.25.10:FF:000142">
    <property type="entry name" value="Crumbs cell polarity complex component 2"/>
    <property type="match status" value="1"/>
</dbReference>
<dbReference type="FunFam" id="2.10.25.10:FF:000136">
    <property type="entry name" value="Neurogenic locus notch 1"/>
    <property type="match status" value="1"/>
</dbReference>
<dbReference type="FunFam" id="3.30.300.320:FF:000001">
    <property type="entry name" value="Neurogenic locus notch 1"/>
    <property type="match status" value="1"/>
</dbReference>
<dbReference type="FunFam" id="2.10.25.10:FF:000272">
    <property type="entry name" value="neurogenic locus notch homolog protein 3"/>
    <property type="match status" value="1"/>
</dbReference>
<dbReference type="FunFam" id="2.10.25.10:FF:000456">
    <property type="entry name" value="Neurogenic locus notch homolog protein 4"/>
    <property type="match status" value="1"/>
</dbReference>
<dbReference type="FunFam" id="1.25.40.20:FF:000152">
    <property type="entry name" value="neurogenic locus notch homolog protein 4"/>
    <property type="match status" value="1"/>
</dbReference>
<dbReference type="FunFam" id="2.10.25.10:FF:000327">
    <property type="entry name" value="neurogenic locus notch homolog protein 4"/>
    <property type="match status" value="2"/>
</dbReference>
<dbReference type="FunFam" id="2.10.25.10:FF:000647">
    <property type="entry name" value="neurogenic locus notch homolog protein 4"/>
    <property type="match status" value="1"/>
</dbReference>
<dbReference type="FunFam" id="2.10.25.10:FF:000738">
    <property type="entry name" value="neurogenic locus notch homolog protein 4"/>
    <property type="match status" value="1"/>
</dbReference>
<dbReference type="FunFam" id="3.30.70.3310:FF:000004">
    <property type="entry name" value="neurogenic locus notch homolog protein 4"/>
    <property type="match status" value="1"/>
</dbReference>
<dbReference type="FunFam" id="2.10.25.10:FF:000651">
    <property type="entry name" value="neurogenic locus notch homolog protein 4 isoform X1"/>
    <property type="match status" value="1"/>
</dbReference>
<dbReference type="FunFam" id="2.10.25.10:FF:000723">
    <property type="entry name" value="neurogenic locus notch homolog protein 4 isoform X1"/>
    <property type="match status" value="1"/>
</dbReference>
<dbReference type="FunFam" id="2.10.25.10:FF:000060">
    <property type="entry name" value="Neurogenic locus notch protein 1"/>
    <property type="match status" value="1"/>
</dbReference>
<dbReference type="FunFam" id="2.10.25.10:FF:000092">
    <property type="entry name" value="Neurogenic locus notch protein 1"/>
    <property type="match status" value="1"/>
</dbReference>
<dbReference type="FunFam" id="2.10.25.10:FF:000125">
    <property type="entry name" value="Neurogenic locus notch protein-like"/>
    <property type="match status" value="1"/>
</dbReference>
<dbReference type="FunFam" id="2.10.25.10:FF:000109">
    <property type="entry name" value="Notch homolog 4, [Drosophila]"/>
    <property type="match status" value="4"/>
</dbReference>
<dbReference type="FunFam" id="2.10.25.10:FF:000479">
    <property type="entry name" value="Notch homolog 4, [Drosophila]"/>
    <property type="match status" value="1"/>
</dbReference>
<dbReference type="FunFam" id="2.10.25.10:FF:000541">
    <property type="entry name" value="Notch homolog 4, [Drosophila]"/>
    <property type="match status" value="1"/>
</dbReference>
<dbReference type="FunFam" id="2.10.25.10:FF:000570">
    <property type="entry name" value="Notch homolog 4, [Drosophila]"/>
    <property type="match status" value="1"/>
</dbReference>
<dbReference type="FunFam" id="2.10.25.10:FF:000588">
    <property type="entry name" value="Notch homolog 4, [Drosophila]"/>
    <property type="match status" value="1"/>
</dbReference>
<dbReference type="FunFam" id="2.10.25.10:FF:000260">
    <property type="entry name" value="Notch receptor 4"/>
    <property type="match status" value="1"/>
</dbReference>
<dbReference type="FunFam" id="2.10.25.10:FF:000054">
    <property type="entry name" value="Slit guidance ligand 2"/>
    <property type="match status" value="1"/>
</dbReference>
<dbReference type="Gene3D" id="3.30.300.320">
    <property type="match status" value="1"/>
</dbReference>
<dbReference type="Gene3D" id="3.30.70.3310">
    <property type="match status" value="1"/>
</dbReference>
<dbReference type="Gene3D" id="1.25.40.20">
    <property type="entry name" value="Ankyrin repeat-containing domain"/>
    <property type="match status" value="1"/>
</dbReference>
<dbReference type="Gene3D" id="2.10.25.10">
    <property type="entry name" value="Laminin"/>
    <property type="match status" value="26"/>
</dbReference>
<dbReference type="InterPro" id="IPR002110">
    <property type="entry name" value="Ankyrin_rpt"/>
</dbReference>
<dbReference type="InterPro" id="IPR036770">
    <property type="entry name" value="Ankyrin_rpt-contain_sf"/>
</dbReference>
<dbReference type="InterPro" id="IPR001881">
    <property type="entry name" value="EGF-like_Ca-bd_dom"/>
</dbReference>
<dbReference type="InterPro" id="IPR013032">
    <property type="entry name" value="EGF-like_CS"/>
</dbReference>
<dbReference type="InterPro" id="IPR000742">
    <property type="entry name" value="EGF-like_dom"/>
</dbReference>
<dbReference type="InterPro" id="IPR000152">
    <property type="entry name" value="EGF-type_Asp/Asn_hydroxyl_site"/>
</dbReference>
<dbReference type="InterPro" id="IPR018097">
    <property type="entry name" value="EGF_Ca-bd_CS"/>
</dbReference>
<dbReference type="InterPro" id="IPR009030">
    <property type="entry name" value="Growth_fac_rcpt_cys_sf"/>
</dbReference>
<dbReference type="InterPro" id="IPR008297">
    <property type="entry name" value="Notch"/>
</dbReference>
<dbReference type="InterPro" id="IPR035993">
    <property type="entry name" value="Notch-like_dom_sf"/>
</dbReference>
<dbReference type="InterPro" id="IPR051355">
    <property type="entry name" value="Notch/Slit_guidance"/>
</dbReference>
<dbReference type="InterPro" id="IPR049883">
    <property type="entry name" value="NOTCH1_EGF-like"/>
</dbReference>
<dbReference type="InterPro" id="IPR022355">
    <property type="entry name" value="Notch_4"/>
</dbReference>
<dbReference type="InterPro" id="IPR000800">
    <property type="entry name" value="Notch_dom"/>
</dbReference>
<dbReference type="InterPro" id="IPR010660">
    <property type="entry name" value="Notch_NOD_dom"/>
</dbReference>
<dbReference type="InterPro" id="IPR011656">
    <property type="entry name" value="Notch_NODP_dom"/>
</dbReference>
<dbReference type="PANTHER" id="PTHR45836:SF23">
    <property type="entry name" value="NEUROGENIC LOCUS NOTCH HOMOLOG PROTEIN 1"/>
    <property type="match status" value="1"/>
</dbReference>
<dbReference type="PANTHER" id="PTHR45836">
    <property type="entry name" value="SLIT HOMOLOG"/>
    <property type="match status" value="1"/>
</dbReference>
<dbReference type="Pfam" id="PF00023">
    <property type="entry name" value="Ank"/>
    <property type="match status" value="1"/>
</dbReference>
<dbReference type="Pfam" id="PF12796">
    <property type="entry name" value="Ank_2"/>
    <property type="match status" value="2"/>
</dbReference>
<dbReference type="Pfam" id="PF00008">
    <property type="entry name" value="EGF"/>
    <property type="match status" value="15"/>
</dbReference>
<dbReference type="Pfam" id="PF07645">
    <property type="entry name" value="EGF_CA"/>
    <property type="match status" value="2"/>
</dbReference>
<dbReference type="Pfam" id="PF12661">
    <property type="entry name" value="hEGF"/>
    <property type="match status" value="4"/>
</dbReference>
<dbReference type="Pfam" id="PF06816">
    <property type="entry name" value="NOD"/>
    <property type="match status" value="1"/>
</dbReference>
<dbReference type="Pfam" id="PF07684">
    <property type="entry name" value="NODP"/>
    <property type="match status" value="1"/>
</dbReference>
<dbReference type="Pfam" id="PF00066">
    <property type="entry name" value="Notch"/>
    <property type="match status" value="3"/>
</dbReference>
<dbReference type="PIRSF" id="PIRSF002279">
    <property type="entry name" value="Notch"/>
    <property type="match status" value="1"/>
</dbReference>
<dbReference type="PRINTS" id="PR01452">
    <property type="entry name" value="LNOTCHREPEAT"/>
</dbReference>
<dbReference type="PRINTS" id="PR01983">
    <property type="entry name" value="NOTCH"/>
</dbReference>
<dbReference type="PRINTS" id="PR01987">
    <property type="entry name" value="NOTCH4"/>
</dbReference>
<dbReference type="SMART" id="SM00248">
    <property type="entry name" value="ANK"/>
    <property type="match status" value="5"/>
</dbReference>
<dbReference type="SMART" id="SM00181">
    <property type="entry name" value="EGF"/>
    <property type="match status" value="29"/>
</dbReference>
<dbReference type="SMART" id="SM00179">
    <property type="entry name" value="EGF_CA"/>
    <property type="match status" value="22"/>
</dbReference>
<dbReference type="SMART" id="SM00004">
    <property type="entry name" value="NL"/>
    <property type="match status" value="3"/>
</dbReference>
<dbReference type="SMART" id="SM01338">
    <property type="entry name" value="NOD"/>
    <property type="match status" value="1"/>
</dbReference>
<dbReference type="SMART" id="SM01339">
    <property type="entry name" value="NODP"/>
    <property type="match status" value="1"/>
</dbReference>
<dbReference type="SUPFAM" id="SSF48403">
    <property type="entry name" value="Ankyrin repeat"/>
    <property type="match status" value="1"/>
</dbReference>
<dbReference type="SUPFAM" id="SSF57196">
    <property type="entry name" value="EGF/Laminin"/>
    <property type="match status" value="11"/>
</dbReference>
<dbReference type="SUPFAM" id="SSF57184">
    <property type="entry name" value="Growth factor receptor domain"/>
    <property type="match status" value="5"/>
</dbReference>
<dbReference type="SUPFAM" id="SSF90193">
    <property type="entry name" value="Notch domain"/>
    <property type="match status" value="2"/>
</dbReference>
<dbReference type="PROSITE" id="PS50297">
    <property type="entry name" value="ANK_REP_REGION"/>
    <property type="match status" value="1"/>
</dbReference>
<dbReference type="PROSITE" id="PS50088">
    <property type="entry name" value="ANK_REPEAT"/>
    <property type="match status" value="5"/>
</dbReference>
<dbReference type="PROSITE" id="PS00010">
    <property type="entry name" value="ASX_HYDROXYL"/>
    <property type="match status" value="11"/>
</dbReference>
<dbReference type="PROSITE" id="PS00022">
    <property type="entry name" value="EGF_1"/>
    <property type="match status" value="28"/>
</dbReference>
<dbReference type="PROSITE" id="PS01186">
    <property type="entry name" value="EGF_2"/>
    <property type="match status" value="21"/>
</dbReference>
<dbReference type="PROSITE" id="PS50026">
    <property type="entry name" value="EGF_3"/>
    <property type="match status" value="28"/>
</dbReference>
<dbReference type="PROSITE" id="PS01187">
    <property type="entry name" value="EGF_CA"/>
    <property type="match status" value="9"/>
</dbReference>
<dbReference type="PROSITE" id="PS50258">
    <property type="entry name" value="LNR"/>
    <property type="match status" value="3"/>
</dbReference>
<evidence type="ECO:0000250" key="1"/>
<evidence type="ECO:0000255" key="2"/>
<evidence type="ECO:0000255" key="3">
    <source>
        <dbReference type="PROSITE-ProRule" id="PRU00076"/>
    </source>
</evidence>
<evidence type="ECO:0000256" key="4">
    <source>
        <dbReference type="SAM" id="MobiDB-lite"/>
    </source>
</evidence>
<evidence type="ECO:0000269" key="5">
    <source>
    </source>
</evidence>
<evidence type="ECO:0000269" key="6">
    <source>
    </source>
</evidence>
<evidence type="ECO:0000269" key="7">
    <source>
    </source>
</evidence>
<evidence type="ECO:0000269" key="8">
    <source>
    </source>
</evidence>
<evidence type="ECO:0000269" key="9">
    <source>
    </source>
</evidence>
<evidence type="ECO:0000269" key="10">
    <source ref="4"/>
</evidence>
<evidence type="ECO:0000303" key="11">
    <source>
    </source>
</evidence>
<evidence type="ECO:0000305" key="12"/>
<evidence type="ECO:0000312" key="13">
    <source>
        <dbReference type="HGNC" id="HGNC:7884"/>
    </source>
</evidence>
<evidence type="ECO:0007829" key="14">
    <source>
        <dbReference type="PDB" id="7OR3"/>
    </source>
</evidence>
<gene>
    <name evidence="13" type="primary">NOTCH4</name>
    <name type="synonym">INT3</name>
</gene>